<accession>B0RRH3</accession>
<comment type="catalytic activity">
    <reaction evidence="1">
        <text>tRNA(Phe) + L-phenylalanine + ATP = L-phenylalanyl-tRNA(Phe) + AMP + diphosphate + H(+)</text>
        <dbReference type="Rhea" id="RHEA:19413"/>
        <dbReference type="Rhea" id="RHEA-COMP:9668"/>
        <dbReference type="Rhea" id="RHEA-COMP:9699"/>
        <dbReference type="ChEBI" id="CHEBI:15378"/>
        <dbReference type="ChEBI" id="CHEBI:30616"/>
        <dbReference type="ChEBI" id="CHEBI:33019"/>
        <dbReference type="ChEBI" id="CHEBI:58095"/>
        <dbReference type="ChEBI" id="CHEBI:78442"/>
        <dbReference type="ChEBI" id="CHEBI:78531"/>
        <dbReference type="ChEBI" id="CHEBI:456215"/>
        <dbReference type="EC" id="6.1.1.20"/>
    </reaction>
</comment>
<comment type="cofactor">
    <cofactor evidence="1">
        <name>Mg(2+)</name>
        <dbReference type="ChEBI" id="CHEBI:18420"/>
    </cofactor>
    <text evidence="1">Binds 2 magnesium ions per tetramer.</text>
</comment>
<comment type="subunit">
    <text evidence="1">Tetramer of two alpha and two beta subunits.</text>
</comment>
<comment type="subcellular location">
    <subcellularLocation>
        <location evidence="1">Cytoplasm</location>
    </subcellularLocation>
</comment>
<comment type="similarity">
    <text evidence="1">Belongs to the class-II aminoacyl-tRNA synthetase family. Phe-tRNA synthetase alpha subunit type 1 subfamily.</text>
</comment>
<sequence length="336" mass="37601">MSEIQSLTAQALADVAAAHTPDQLETLRVALLGKNGSITAQLKQLGTLPADQRKAAGEAINLARDALTTALSERKQVLETAALDARLEGERIDVTLPGRRGERGGLHPVTRTLERIVEIFARLGYELSDGPEIEDDWHNFEALNFPPHHPARAMHDTFYFGDGRLLRTHTSGVQVRYMDTAVATKSGPPLRMIAAGKVYRSDSDQTHSPMFHQVEGLLVDEHSNFADLKGTLSEFVRAFFERDFEMRFRPSYFPFVEPGAEVDIAWQQPDGSTRWLEVLGCGMVHPNVLRSVGIDPERYTGFAFGLGVERFAMLRYGVNDLRAFFENDVRFLRQFA</sequence>
<reference key="1">
    <citation type="journal article" date="2008" name="J. Biotechnol.">
        <title>The genome of Xanthomonas campestris pv. campestris B100 and its use for the reconstruction of metabolic pathways involved in xanthan biosynthesis.</title>
        <authorList>
            <person name="Vorhoelter F.-J."/>
            <person name="Schneiker S."/>
            <person name="Goesmann A."/>
            <person name="Krause L."/>
            <person name="Bekel T."/>
            <person name="Kaiser O."/>
            <person name="Linke B."/>
            <person name="Patschkowski T."/>
            <person name="Rueckert C."/>
            <person name="Schmid J."/>
            <person name="Sidhu V.K."/>
            <person name="Sieber V."/>
            <person name="Tauch A."/>
            <person name="Watt S.A."/>
            <person name="Weisshaar B."/>
            <person name="Becker A."/>
            <person name="Niehaus K."/>
            <person name="Puehler A."/>
        </authorList>
    </citation>
    <scope>NUCLEOTIDE SEQUENCE [LARGE SCALE GENOMIC DNA]</scope>
    <source>
        <strain>B100</strain>
    </source>
</reference>
<evidence type="ECO:0000255" key="1">
    <source>
        <dbReference type="HAMAP-Rule" id="MF_00281"/>
    </source>
</evidence>
<name>SYFA_XANCB</name>
<organism>
    <name type="scientific">Xanthomonas campestris pv. campestris (strain B100)</name>
    <dbReference type="NCBI Taxonomy" id="509169"/>
    <lineage>
        <taxon>Bacteria</taxon>
        <taxon>Pseudomonadati</taxon>
        <taxon>Pseudomonadota</taxon>
        <taxon>Gammaproteobacteria</taxon>
        <taxon>Lysobacterales</taxon>
        <taxon>Lysobacteraceae</taxon>
        <taxon>Xanthomonas</taxon>
    </lineage>
</organism>
<keyword id="KW-0030">Aminoacyl-tRNA synthetase</keyword>
<keyword id="KW-0067">ATP-binding</keyword>
<keyword id="KW-0963">Cytoplasm</keyword>
<keyword id="KW-0436">Ligase</keyword>
<keyword id="KW-0460">Magnesium</keyword>
<keyword id="KW-0479">Metal-binding</keyword>
<keyword id="KW-0547">Nucleotide-binding</keyword>
<keyword id="KW-0648">Protein biosynthesis</keyword>
<feature type="chain" id="PRO_1000114928" description="Phenylalanine--tRNA ligase alpha subunit">
    <location>
        <begin position="1"/>
        <end position="336"/>
    </location>
</feature>
<feature type="binding site" evidence="1">
    <location>
        <position position="257"/>
    </location>
    <ligand>
        <name>Mg(2+)</name>
        <dbReference type="ChEBI" id="CHEBI:18420"/>
        <note>shared with beta subunit</note>
    </ligand>
</feature>
<gene>
    <name evidence="1" type="primary">pheS</name>
    <name type="ordered locus">xcc-b100_1708</name>
</gene>
<proteinExistence type="inferred from homology"/>
<dbReference type="EC" id="6.1.1.20" evidence="1"/>
<dbReference type="EMBL" id="AM920689">
    <property type="protein sequence ID" value="CAP51058.1"/>
    <property type="molecule type" value="Genomic_DNA"/>
</dbReference>
<dbReference type="SMR" id="B0RRH3"/>
<dbReference type="KEGG" id="xca:xcc-b100_1708"/>
<dbReference type="HOGENOM" id="CLU_025086_0_1_6"/>
<dbReference type="Proteomes" id="UP000001188">
    <property type="component" value="Chromosome"/>
</dbReference>
<dbReference type="GO" id="GO:0005737">
    <property type="term" value="C:cytoplasm"/>
    <property type="evidence" value="ECO:0007669"/>
    <property type="project" value="UniProtKB-SubCell"/>
</dbReference>
<dbReference type="GO" id="GO:0005524">
    <property type="term" value="F:ATP binding"/>
    <property type="evidence" value="ECO:0007669"/>
    <property type="project" value="UniProtKB-UniRule"/>
</dbReference>
<dbReference type="GO" id="GO:0000287">
    <property type="term" value="F:magnesium ion binding"/>
    <property type="evidence" value="ECO:0007669"/>
    <property type="project" value="UniProtKB-UniRule"/>
</dbReference>
<dbReference type="GO" id="GO:0004826">
    <property type="term" value="F:phenylalanine-tRNA ligase activity"/>
    <property type="evidence" value="ECO:0007669"/>
    <property type="project" value="UniProtKB-UniRule"/>
</dbReference>
<dbReference type="GO" id="GO:0000049">
    <property type="term" value="F:tRNA binding"/>
    <property type="evidence" value="ECO:0007669"/>
    <property type="project" value="InterPro"/>
</dbReference>
<dbReference type="GO" id="GO:0006432">
    <property type="term" value="P:phenylalanyl-tRNA aminoacylation"/>
    <property type="evidence" value="ECO:0007669"/>
    <property type="project" value="UniProtKB-UniRule"/>
</dbReference>
<dbReference type="CDD" id="cd00496">
    <property type="entry name" value="PheRS_alpha_core"/>
    <property type="match status" value="1"/>
</dbReference>
<dbReference type="FunFam" id="3.30.930.10:FF:000003">
    <property type="entry name" value="Phenylalanine--tRNA ligase alpha subunit"/>
    <property type="match status" value="1"/>
</dbReference>
<dbReference type="Gene3D" id="3.30.930.10">
    <property type="entry name" value="Bira Bifunctional Protein, Domain 2"/>
    <property type="match status" value="1"/>
</dbReference>
<dbReference type="HAMAP" id="MF_00281">
    <property type="entry name" value="Phe_tRNA_synth_alpha1"/>
    <property type="match status" value="1"/>
</dbReference>
<dbReference type="InterPro" id="IPR006195">
    <property type="entry name" value="aa-tRNA-synth_II"/>
</dbReference>
<dbReference type="InterPro" id="IPR045864">
    <property type="entry name" value="aa-tRNA-synth_II/BPL/LPL"/>
</dbReference>
<dbReference type="InterPro" id="IPR004529">
    <property type="entry name" value="Phe-tRNA-synth_IIc_asu"/>
</dbReference>
<dbReference type="InterPro" id="IPR004188">
    <property type="entry name" value="Phe-tRNA_ligase_II_N"/>
</dbReference>
<dbReference type="InterPro" id="IPR022911">
    <property type="entry name" value="Phe_tRNA_ligase_alpha1_bac"/>
</dbReference>
<dbReference type="InterPro" id="IPR002319">
    <property type="entry name" value="Phenylalanyl-tRNA_Synthase"/>
</dbReference>
<dbReference type="InterPro" id="IPR010978">
    <property type="entry name" value="tRNA-bd_arm"/>
</dbReference>
<dbReference type="NCBIfam" id="TIGR00468">
    <property type="entry name" value="pheS"/>
    <property type="match status" value="1"/>
</dbReference>
<dbReference type="PANTHER" id="PTHR11538:SF41">
    <property type="entry name" value="PHENYLALANINE--TRNA LIGASE, MITOCHONDRIAL"/>
    <property type="match status" value="1"/>
</dbReference>
<dbReference type="PANTHER" id="PTHR11538">
    <property type="entry name" value="PHENYLALANYL-TRNA SYNTHETASE"/>
    <property type="match status" value="1"/>
</dbReference>
<dbReference type="Pfam" id="PF02912">
    <property type="entry name" value="Phe_tRNA-synt_N"/>
    <property type="match status" value="1"/>
</dbReference>
<dbReference type="Pfam" id="PF01409">
    <property type="entry name" value="tRNA-synt_2d"/>
    <property type="match status" value="1"/>
</dbReference>
<dbReference type="SUPFAM" id="SSF55681">
    <property type="entry name" value="Class II aaRS and biotin synthetases"/>
    <property type="match status" value="1"/>
</dbReference>
<dbReference type="SUPFAM" id="SSF46589">
    <property type="entry name" value="tRNA-binding arm"/>
    <property type="match status" value="1"/>
</dbReference>
<dbReference type="PROSITE" id="PS50862">
    <property type="entry name" value="AA_TRNA_LIGASE_II"/>
    <property type="match status" value="1"/>
</dbReference>
<protein>
    <recommendedName>
        <fullName evidence="1">Phenylalanine--tRNA ligase alpha subunit</fullName>
        <ecNumber evidence="1">6.1.1.20</ecNumber>
    </recommendedName>
    <alternativeName>
        <fullName evidence="1">Phenylalanyl-tRNA synthetase alpha subunit</fullName>
        <shortName evidence="1">PheRS</shortName>
    </alternativeName>
</protein>